<protein>
    <recommendedName>
        <fullName>Protein RALF-like 24</fullName>
    </recommendedName>
</protein>
<feature type="signal peptide" evidence="2">
    <location>
        <begin position="1"/>
        <end position="22"/>
    </location>
</feature>
<feature type="propeptide" id="PRO_0000420320" description="Removed in mature form" evidence="1">
    <location>
        <begin position="23"/>
        <end position="63"/>
    </location>
</feature>
<feature type="chain" id="PRO_0000420321" description="Protein RALF-like 24">
    <location>
        <begin position="64"/>
        <end position="118"/>
    </location>
</feature>
<feature type="site" description="Required for proteolytic cleavage" evidence="1">
    <location>
        <begin position="59"/>
        <end position="60"/>
    </location>
</feature>
<feature type="disulfide bond" evidence="1">
    <location>
        <begin position="81"/>
        <end position="91"/>
    </location>
</feature>
<feature type="disulfide bond" evidence="1">
    <location>
        <begin position="103"/>
        <end position="109"/>
    </location>
</feature>
<evidence type="ECO:0000250" key="1"/>
<evidence type="ECO:0000255" key="2"/>
<evidence type="ECO:0000305" key="3"/>
<reference key="1">
    <citation type="journal article" date="2000" name="DNA Res.">
        <title>Structural analysis of Arabidopsis thaliana chromosome 3. II. Sequence features of the 4,251,695 bp regions covered by 90 P1, TAC and BAC clones.</title>
        <authorList>
            <person name="Kaneko T."/>
            <person name="Katoh T."/>
            <person name="Sato S."/>
            <person name="Nakamura Y."/>
            <person name="Asamizu E."/>
            <person name="Tabata S."/>
        </authorList>
    </citation>
    <scope>NUCLEOTIDE SEQUENCE [LARGE SCALE GENOMIC DNA]</scope>
    <source>
        <strain>cv. Columbia</strain>
    </source>
</reference>
<reference key="2">
    <citation type="journal article" date="2017" name="Plant J.">
        <title>Araport11: a complete reannotation of the Arabidopsis thaliana reference genome.</title>
        <authorList>
            <person name="Cheng C.Y."/>
            <person name="Krishnakumar V."/>
            <person name="Chan A.P."/>
            <person name="Thibaud-Nissen F."/>
            <person name="Schobel S."/>
            <person name="Town C.D."/>
        </authorList>
    </citation>
    <scope>GENOME REANNOTATION</scope>
    <source>
        <strain>cv. Columbia</strain>
    </source>
</reference>
<reference key="3">
    <citation type="journal article" date="2004" name="Genome Res.">
        <title>Whole genome sequence comparisons and 'full-length' cDNA sequences: a combined approach to evaluate and improve Arabidopsis genome annotation.</title>
        <authorList>
            <person name="Castelli V."/>
            <person name="Aury J.-M."/>
            <person name="Jaillon O."/>
            <person name="Wincker P."/>
            <person name="Clepet C."/>
            <person name="Menard M."/>
            <person name="Cruaud C."/>
            <person name="Quetier F."/>
            <person name="Scarpelli C."/>
            <person name="Schaechter V."/>
            <person name="Temple G."/>
            <person name="Caboche M."/>
            <person name="Weissenbach J."/>
            <person name="Salanoubat M."/>
        </authorList>
    </citation>
    <scope>NUCLEOTIDE SEQUENCE [LARGE SCALE MRNA] OF 2-18</scope>
    <source>
        <strain>cv. Columbia</strain>
    </source>
</reference>
<reference key="4">
    <citation type="journal article" date="2002" name="In Silico Biol.">
        <title>Peptomics, identification of novel cationic Arabidopsis peptides with conserved sequence motifs.</title>
        <authorList>
            <person name="Olsen A.N."/>
            <person name="Mundy J."/>
            <person name="Skriver K."/>
        </authorList>
    </citation>
    <scope>GENE FAMILY</scope>
    <scope>NOMENCLATURE</scope>
</reference>
<name>RLF24_ARATH</name>
<gene>
    <name type="primary">RALFL24</name>
    <name type="ordered locus">At3g23805</name>
    <name type="ORF">MYM9.15</name>
</gene>
<proteinExistence type="inferred from homology"/>
<sequence>MSRSLALVYLSLLCLQTHLSISVTVPIPSVNGEIDAMLNRNGVIGEEEGEEMMPSEISRRVMMMRKQYISYETLRRDMVPCQKPGASYYACRSGQANAYNRGCSVITRCARDTNDIKT</sequence>
<accession>Q9LK37</accession>
<comment type="function">
    <text evidence="1">Cell signaling peptide that may regulate plant stress, growth, and development. Mediates a rapid alkalinization of extracellular space by mediating a transient increase in the cytoplasmic Ca(2+) concentration leading to a calcium-dependent signaling events through a cell surface receptor and a concomitant activation of some intracellular mitogen-activated protein kinases (By similarity).</text>
</comment>
<comment type="subcellular location">
    <subcellularLocation>
        <location evidence="1">Secreted</location>
    </subcellularLocation>
</comment>
<comment type="PTM">
    <text evidence="1">Proteolytically cleaved, probably by S1P, a subtilisin-like serine protease (subtilase).</text>
</comment>
<comment type="similarity">
    <text evidence="3">Belongs to the plant rapid alkalinization factor (RALF) family.</text>
</comment>
<comment type="sequence caution" evidence="3">
    <conflict type="frameshift">
        <sequence resource="EMBL" id="BX825164"/>
    </conflict>
</comment>
<keyword id="KW-1015">Disulfide bond</keyword>
<keyword id="KW-0372">Hormone</keyword>
<keyword id="KW-1185">Reference proteome</keyword>
<keyword id="KW-0964">Secreted</keyword>
<keyword id="KW-0732">Signal</keyword>
<dbReference type="EMBL" id="AP000377">
    <property type="protein sequence ID" value="BAB01857.1"/>
    <property type="molecule type" value="Genomic_DNA"/>
</dbReference>
<dbReference type="EMBL" id="CP002686">
    <property type="protein sequence ID" value="AEE76816.1"/>
    <property type="molecule type" value="Genomic_DNA"/>
</dbReference>
<dbReference type="EMBL" id="BX825164">
    <property type="status" value="NOT_ANNOTATED_CDS"/>
    <property type="molecule type" value="mRNA"/>
</dbReference>
<dbReference type="RefSeq" id="NP_566740.1">
    <property type="nucleotide sequence ID" value="NM_113285.3"/>
</dbReference>
<dbReference type="SMR" id="Q9LK37"/>
<dbReference type="FunCoup" id="Q9LK37">
    <property type="interactions" value="5"/>
</dbReference>
<dbReference type="STRING" id="3702.Q9LK37"/>
<dbReference type="PaxDb" id="3702-AT3G23805.1"/>
<dbReference type="ProteomicsDB" id="228092"/>
<dbReference type="EnsemblPlants" id="AT3G23805.1">
    <property type="protein sequence ID" value="AT3G23805.1"/>
    <property type="gene ID" value="AT3G23805"/>
</dbReference>
<dbReference type="GeneID" id="821963"/>
<dbReference type="Gramene" id="AT3G23805.1">
    <property type="protein sequence ID" value="AT3G23805.1"/>
    <property type="gene ID" value="AT3G23805"/>
</dbReference>
<dbReference type="KEGG" id="ath:AT3G23805"/>
<dbReference type="Araport" id="AT3G23805"/>
<dbReference type="TAIR" id="AT3G23805">
    <property type="gene designation" value="RALFL24"/>
</dbReference>
<dbReference type="eggNOG" id="ENOG502S4CN">
    <property type="taxonomic scope" value="Eukaryota"/>
</dbReference>
<dbReference type="HOGENOM" id="CLU_127895_0_0_1"/>
<dbReference type="InParanoid" id="Q9LK37"/>
<dbReference type="OMA" id="QANAYNR"/>
<dbReference type="OrthoDB" id="1906275at2759"/>
<dbReference type="PhylomeDB" id="Q9LK37"/>
<dbReference type="PRO" id="PR:Q9LK37"/>
<dbReference type="Proteomes" id="UP000006548">
    <property type="component" value="Chromosome 3"/>
</dbReference>
<dbReference type="ExpressionAtlas" id="Q9LK37">
    <property type="expression patterns" value="baseline and differential"/>
</dbReference>
<dbReference type="GO" id="GO:0048046">
    <property type="term" value="C:apoplast"/>
    <property type="evidence" value="ECO:0000250"/>
    <property type="project" value="TAIR"/>
</dbReference>
<dbReference type="GO" id="GO:0005179">
    <property type="term" value="F:hormone activity"/>
    <property type="evidence" value="ECO:0000250"/>
    <property type="project" value="UniProtKB"/>
</dbReference>
<dbReference type="GO" id="GO:0019722">
    <property type="term" value="P:calcium-mediated signaling"/>
    <property type="evidence" value="ECO:0000250"/>
    <property type="project" value="UniProtKB"/>
</dbReference>
<dbReference type="GO" id="GO:0007267">
    <property type="term" value="P:cell-cell signaling"/>
    <property type="evidence" value="ECO:0000250"/>
    <property type="project" value="TAIR"/>
</dbReference>
<dbReference type="GO" id="GO:0040008">
    <property type="term" value="P:regulation of growth"/>
    <property type="evidence" value="ECO:0007669"/>
    <property type="project" value="UniProtKB-ARBA"/>
</dbReference>
<dbReference type="InterPro" id="IPR008801">
    <property type="entry name" value="RALF"/>
</dbReference>
<dbReference type="PANTHER" id="PTHR33136:SF43">
    <property type="entry name" value="PROTEIN RALF-LIKE 24"/>
    <property type="match status" value="1"/>
</dbReference>
<dbReference type="PANTHER" id="PTHR33136">
    <property type="entry name" value="RAPID ALKALINIZATION FACTOR-LIKE"/>
    <property type="match status" value="1"/>
</dbReference>
<dbReference type="Pfam" id="PF05498">
    <property type="entry name" value="RALF"/>
    <property type="match status" value="1"/>
</dbReference>
<organism>
    <name type="scientific">Arabidopsis thaliana</name>
    <name type="common">Mouse-ear cress</name>
    <dbReference type="NCBI Taxonomy" id="3702"/>
    <lineage>
        <taxon>Eukaryota</taxon>
        <taxon>Viridiplantae</taxon>
        <taxon>Streptophyta</taxon>
        <taxon>Embryophyta</taxon>
        <taxon>Tracheophyta</taxon>
        <taxon>Spermatophyta</taxon>
        <taxon>Magnoliopsida</taxon>
        <taxon>eudicotyledons</taxon>
        <taxon>Gunneridae</taxon>
        <taxon>Pentapetalae</taxon>
        <taxon>rosids</taxon>
        <taxon>malvids</taxon>
        <taxon>Brassicales</taxon>
        <taxon>Brassicaceae</taxon>
        <taxon>Camelineae</taxon>
        <taxon>Arabidopsis</taxon>
    </lineage>
</organism>